<dbReference type="EC" id="4.3.2.1" evidence="1"/>
<dbReference type="EMBL" id="CP000745">
    <property type="protein sequence ID" value="ABR66077.1"/>
    <property type="molecule type" value="Genomic_DNA"/>
</dbReference>
<dbReference type="SMR" id="A6VI01"/>
<dbReference type="STRING" id="426368.MmarC7_1010"/>
<dbReference type="KEGG" id="mmz:MmarC7_1010"/>
<dbReference type="eggNOG" id="arCOG01748">
    <property type="taxonomic scope" value="Archaea"/>
</dbReference>
<dbReference type="HOGENOM" id="CLU_027272_2_3_2"/>
<dbReference type="OrthoDB" id="27337at2157"/>
<dbReference type="UniPathway" id="UPA00068">
    <property type="reaction ID" value="UER00114"/>
</dbReference>
<dbReference type="GO" id="GO:0005829">
    <property type="term" value="C:cytosol"/>
    <property type="evidence" value="ECO:0007669"/>
    <property type="project" value="TreeGrafter"/>
</dbReference>
<dbReference type="GO" id="GO:0004056">
    <property type="term" value="F:argininosuccinate lyase activity"/>
    <property type="evidence" value="ECO:0007669"/>
    <property type="project" value="UniProtKB-UniRule"/>
</dbReference>
<dbReference type="GO" id="GO:0042450">
    <property type="term" value="P:arginine biosynthetic process via ornithine"/>
    <property type="evidence" value="ECO:0007669"/>
    <property type="project" value="InterPro"/>
</dbReference>
<dbReference type="GO" id="GO:0006526">
    <property type="term" value="P:L-arginine biosynthetic process"/>
    <property type="evidence" value="ECO:0007669"/>
    <property type="project" value="UniProtKB-UniRule"/>
</dbReference>
<dbReference type="CDD" id="cd01359">
    <property type="entry name" value="Argininosuccinate_lyase"/>
    <property type="match status" value="1"/>
</dbReference>
<dbReference type="FunFam" id="1.10.40.30:FF:000001">
    <property type="entry name" value="Argininosuccinate lyase"/>
    <property type="match status" value="1"/>
</dbReference>
<dbReference type="FunFam" id="1.20.200.10:FF:000015">
    <property type="entry name" value="argininosuccinate lyase isoform X2"/>
    <property type="match status" value="1"/>
</dbReference>
<dbReference type="Gene3D" id="1.10.40.30">
    <property type="entry name" value="Fumarase/aspartase (C-terminal domain)"/>
    <property type="match status" value="1"/>
</dbReference>
<dbReference type="Gene3D" id="1.20.200.10">
    <property type="entry name" value="Fumarase/aspartase (Central domain)"/>
    <property type="match status" value="1"/>
</dbReference>
<dbReference type="Gene3D" id="1.10.275.10">
    <property type="entry name" value="Fumarase/aspartase (N-terminal domain)"/>
    <property type="match status" value="1"/>
</dbReference>
<dbReference type="HAMAP" id="MF_00006">
    <property type="entry name" value="Arg_succ_lyase"/>
    <property type="match status" value="1"/>
</dbReference>
<dbReference type="InterPro" id="IPR029419">
    <property type="entry name" value="Arg_succ_lyase_C"/>
</dbReference>
<dbReference type="InterPro" id="IPR009049">
    <property type="entry name" value="Argininosuccinate_lyase"/>
</dbReference>
<dbReference type="InterPro" id="IPR024083">
    <property type="entry name" value="Fumarase/histidase_N"/>
</dbReference>
<dbReference type="InterPro" id="IPR000362">
    <property type="entry name" value="Fumarate_lyase_fam"/>
</dbReference>
<dbReference type="InterPro" id="IPR022761">
    <property type="entry name" value="Fumarate_lyase_N"/>
</dbReference>
<dbReference type="InterPro" id="IPR008948">
    <property type="entry name" value="L-Aspartase-like"/>
</dbReference>
<dbReference type="NCBIfam" id="TIGR00838">
    <property type="entry name" value="argH"/>
    <property type="match status" value="1"/>
</dbReference>
<dbReference type="PANTHER" id="PTHR43814">
    <property type="entry name" value="ARGININOSUCCINATE LYASE"/>
    <property type="match status" value="1"/>
</dbReference>
<dbReference type="PANTHER" id="PTHR43814:SF1">
    <property type="entry name" value="ARGININOSUCCINATE LYASE"/>
    <property type="match status" value="1"/>
</dbReference>
<dbReference type="Pfam" id="PF14698">
    <property type="entry name" value="ASL_C2"/>
    <property type="match status" value="1"/>
</dbReference>
<dbReference type="Pfam" id="PF00206">
    <property type="entry name" value="Lyase_1"/>
    <property type="match status" value="1"/>
</dbReference>
<dbReference type="PRINTS" id="PR00145">
    <property type="entry name" value="ARGSUCLYASE"/>
</dbReference>
<dbReference type="PRINTS" id="PR00149">
    <property type="entry name" value="FUMRATELYASE"/>
</dbReference>
<dbReference type="SUPFAM" id="SSF48557">
    <property type="entry name" value="L-aspartase-like"/>
    <property type="match status" value="1"/>
</dbReference>
<reference key="1">
    <citation type="submission" date="2007-06" db="EMBL/GenBank/DDBJ databases">
        <title>Complete sequence of Methanococcus maripaludis C7.</title>
        <authorList>
            <consortium name="US DOE Joint Genome Institute"/>
            <person name="Copeland A."/>
            <person name="Lucas S."/>
            <person name="Lapidus A."/>
            <person name="Barry K."/>
            <person name="Glavina del Rio T."/>
            <person name="Dalin E."/>
            <person name="Tice H."/>
            <person name="Pitluck S."/>
            <person name="Clum A."/>
            <person name="Schmutz J."/>
            <person name="Larimer F."/>
            <person name="Land M."/>
            <person name="Hauser L."/>
            <person name="Kyrpides N."/>
            <person name="Anderson I."/>
            <person name="Sieprawska-Lupa M."/>
            <person name="Whitman W.B."/>
            <person name="Richardson P."/>
        </authorList>
    </citation>
    <scope>NUCLEOTIDE SEQUENCE [LARGE SCALE GENOMIC DNA]</scope>
    <source>
        <strain>C7 / ATCC BAA-1331</strain>
    </source>
</reference>
<keyword id="KW-0028">Amino-acid biosynthesis</keyword>
<keyword id="KW-0055">Arginine biosynthesis</keyword>
<keyword id="KW-0963">Cytoplasm</keyword>
<keyword id="KW-0456">Lyase</keyword>
<organism>
    <name type="scientific">Methanococcus maripaludis (strain C7 / ATCC BAA-1331)</name>
    <dbReference type="NCBI Taxonomy" id="426368"/>
    <lineage>
        <taxon>Archaea</taxon>
        <taxon>Methanobacteriati</taxon>
        <taxon>Methanobacteriota</taxon>
        <taxon>Methanomada group</taxon>
        <taxon>Methanococci</taxon>
        <taxon>Methanococcales</taxon>
        <taxon>Methanococcaceae</taxon>
        <taxon>Methanococcus</taxon>
    </lineage>
</organism>
<feature type="chain" id="PRO_1000000501" description="Argininosuccinate lyase">
    <location>
        <begin position="1"/>
        <end position="481"/>
    </location>
</feature>
<evidence type="ECO:0000255" key="1">
    <source>
        <dbReference type="HAMAP-Rule" id="MF_00006"/>
    </source>
</evidence>
<proteinExistence type="inferred from homology"/>
<name>ARLY_METM7</name>
<sequence length="481" mass="54274">MNILRRGRLGSNVKEDVMKFTTSLEFDKEIFESDILCDIAHTTMLIEQNVISEENGKKIIAELKKIAEKGMENLDLDPSLDDIHMVIESELIKELGEDVAGRMHTGRSRNDEVATDLRLSLRKKVLEIIGHLITMEQNMLKVSNEHKETLTVGYTHLQQAQPVTFGHHILSHVSAIERDISRFFDTYNRINISPLGCSAMATTGFNLNRKRTQELLGFYDIIENSMDGVSSRDFIVETMANISMLGTNLSKICEELVVFSSAEFNTIEIANEYTSTSSIMPQKKNPDVAEITRAKLSTLNGELVTVLTIMKALPNTYNRDLQEISPHLWKSVYTLIDCIQMVDGMISTIKVNKERMKENAEKNYSTATELADTLVRECGIAFRMAHGIVGELVKRSIEEKVEIKEIILEVLEKNNLSLSQEKIDTALDPFENVKLRNVIGGPAPEEVERAISSFNTKISTHKEKLDEKIAEVNTVNKNLLK</sequence>
<gene>
    <name evidence="1" type="primary">argH</name>
    <name type="ordered locus">MmarC7_1010</name>
</gene>
<accession>A6VI01</accession>
<comment type="catalytic activity">
    <reaction evidence="1">
        <text>2-(N(omega)-L-arginino)succinate = fumarate + L-arginine</text>
        <dbReference type="Rhea" id="RHEA:24020"/>
        <dbReference type="ChEBI" id="CHEBI:29806"/>
        <dbReference type="ChEBI" id="CHEBI:32682"/>
        <dbReference type="ChEBI" id="CHEBI:57472"/>
        <dbReference type="EC" id="4.3.2.1"/>
    </reaction>
</comment>
<comment type="pathway">
    <text evidence="1">Amino-acid biosynthesis; L-arginine biosynthesis; L-arginine from L-ornithine and carbamoyl phosphate: step 3/3.</text>
</comment>
<comment type="subcellular location">
    <subcellularLocation>
        <location evidence="1">Cytoplasm</location>
    </subcellularLocation>
</comment>
<comment type="similarity">
    <text evidence="1">Belongs to the lyase 1 family. Argininosuccinate lyase subfamily.</text>
</comment>
<protein>
    <recommendedName>
        <fullName evidence="1">Argininosuccinate lyase</fullName>
        <shortName evidence="1">ASAL</shortName>
        <ecNumber evidence="1">4.3.2.1</ecNumber>
    </recommendedName>
    <alternativeName>
        <fullName evidence="1">Arginosuccinase</fullName>
    </alternativeName>
</protein>